<accession>Q9U757</accession>
<gene>
    <name type="primary">nxt-1</name>
    <name type="synonym">nxt1</name>
    <name type="ORF">Y71F9AM.5</name>
</gene>
<proteinExistence type="evidence at protein level"/>
<keyword id="KW-0002">3D-structure</keyword>
<keyword id="KW-0509">mRNA transport</keyword>
<keyword id="KW-0539">Nucleus</keyword>
<keyword id="KW-0653">Protein transport</keyword>
<keyword id="KW-1185">Reference proteome</keyword>
<keyword id="KW-0813">Transport</keyword>
<protein>
    <recommendedName>
        <fullName>NTF2-related export protein</fullName>
    </recommendedName>
</protein>
<sequence>MSMKTTQEINKEDEELCNESKKFMDVYYDVMDRKREKIGFLYTQVSNAVWNGNPINGYDSICEFMKALPSTQHDIQSLDAQRLPEGVTGDMSGGMLLNVAGAVTVDGDSKRAFTQTLLLGVEDGKYKVKSDRFRYVD</sequence>
<organism>
    <name type="scientific">Caenorhabditis elegans</name>
    <dbReference type="NCBI Taxonomy" id="6239"/>
    <lineage>
        <taxon>Eukaryota</taxon>
        <taxon>Metazoa</taxon>
        <taxon>Ecdysozoa</taxon>
        <taxon>Nematoda</taxon>
        <taxon>Chromadorea</taxon>
        <taxon>Rhabditida</taxon>
        <taxon>Rhabditina</taxon>
        <taxon>Rhabditomorpha</taxon>
        <taxon>Rhabditoidea</taxon>
        <taxon>Rhabditidae</taxon>
        <taxon>Peloderinae</taxon>
        <taxon>Caenorhabditis</taxon>
    </lineage>
</organism>
<feature type="chain" id="PRO_0000194797" description="NTF2-related export protein">
    <location>
        <begin position="1"/>
        <end position="137"/>
    </location>
</feature>
<feature type="domain" description="NTF2" evidence="2">
    <location>
        <begin position="19"/>
        <end position="135"/>
    </location>
</feature>
<feature type="helix" evidence="3">
    <location>
        <begin position="6"/>
        <end position="33"/>
    </location>
</feature>
<feature type="helix" evidence="3">
    <location>
        <begin position="35"/>
        <end position="41"/>
    </location>
</feature>
<feature type="strand" evidence="3">
    <location>
        <begin position="42"/>
        <end position="50"/>
    </location>
</feature>
<feature type="strand" evidence="3">
    <location>
        <begin position="53"/>
        <end position="57"/>
    </location>
</feature>
<feature type="helix" evidence="3">
    <location>
        <begin position="58"/>
        <end position="67"/>
    </location>
</feature>
<feature type="strand" evidence="3">
    <location>
        <begin position="71"/>
        <end position="82"/>
    </location>
</feature>
<feature type="helix" evidence="3">
    <location>
        <begin position="89"/>
        <end position="91"/>
    </location>
</feature>
<feature type="strand" evidence="3">
    <location>
        <begin position="95"/>
        <end position="105"/>
    </location>
</feature>
<feature type="strand" evidence="3">
    <location>
        <begin position="111"/>
        <end position="122"/>
    </location>
</feature>
<feature type="strand" evidence="3">
    <location>
        <begin position="125"/>
        <end position="135"/>
    </location>
</feature>
<dbReference type="EMBL" id="AF156960">
    <property type="protein sequence ID" value="AAD54945.1"/>
    <property type="molecule type" value="mRNA"/>
</dbReference>
<dbReference type="EMBL" id="FO081820">
    <property type="protein sequence ID" value="CCD73516.1"/>
    <property type="molecule type" value="Genomic_DNA"/>
</dbReference>
<dbReference type="RefSeq" id="NP_491077.1">
    <property type="nucleotide sequence ID" value="NM_058676.6"/>
</dbReference>
<dbReference type="PDB" id="3NV0">
    <property type="method" value="X-ray"/>
    <property type="resolution" value="1.84 A"/>
    <property type="chains" value="B=2-137"/>
</dbReference>
<dbReference type="PDBsum" id="3NV0"/>
<dbReference type="SMR" id="Q9U757"/>
<dbReference type="BioGRID" id="37344">
    <property type="interactions" value="3"/>
</dbReference>
<dbReference type="FunCoup" id="Q9U757">
    <property type="interactions" value="2308"/>
</dbReference>
<dbReference type="IntAct" id="Q9U757">
    <property type="interactions" value="1"/>
</dbReference>
<dbReference type="STRING" id="6239.Y71F9AM.5a.1"/>
<dbReference type="PaxDb" id="6239-Y71F9AM.5a"/>
<dbReference type="EnsemblMetazoa" id="Y71F9AM.5a.1">
    <property type="protein sequence ID" value="Y71F9AM.5a.1"/>
    <property type="gene ID" value="WBGene00003836"/>
</dbReference>
<dbReference type="GeneID" id="171866"/>
<dbReference type="KEGG" id="cel:CELE_Y71F9AM.5"/>
<dbReference type="UCSC" id="Y71F9AM.5b">
    <property type="organism name" value="c. elegans"/>
</dbReference>
<dbReference type="AGR" id="WB:WBGene00003836"/>
<dbReference type="CTD" id="171866"/>
<dbReference type="WormBase" id="Y71F9AM.5a">
    <property type="protein sequence ID" value="CE26780"/>
    <property type="gene ID" value="WBGene00003836"/>
    <property type="gene designation" value="nxt-1"/>
</dbReference>
<dbReference type="eggNOG" id="KOG4353">
    <property type="taxonomic scope" value="Eukaryota"/>
</dbReference>
<dbReference type="GeneTree" id="ENSGT00940000170896"/>
<dbReference type="InParanoid" id="Q9U757"/>
<dbReference type="OMA" id="HFTRLYY"/>
<dbReference type="OrthoDB" id="25408at2759"/>
<dbReference type="PhylomeDB" id="Q9U757"/>
<dbReference type="Reactome" id="R-CEL-159236">
    <property type="pathway name" value="Transport of Mature mRNA derived from an Intron-Containing Transcript"/>
</dbReference>
<dbReference type="EvolutionaryTrace" id="Q9U757"/>
<dbReference type="PRO" id="PR:Q9U757"/>
<dbReference type="Proteomes" id="UP000001940">
    <property type="component" value="Chromosome I"/>
</dbReference>
<dbReference type="Bgee" id="WBGene00003836">
    <property type="expression patterns" value="Expressed in germ line (C elegans) and 4 other cell types or tissues"/>
</dbReference>
<dbReference type="ExpressionAtlas" id="Q9U757">
    <property type="expression patterns" value="baseline and differential"/>
</dbReference>
<dbReference type="GO" id="GO:0044613">
    <property type="term" value="C:nuclear pore central transport channel"/>
    <property type="evidence" value="ECO:0000318"/>
    <property type="project" value="GO_Central"/>
</dbReference>
<dbReference type="GO" id="GO:0016973">
    <property type="term" value="P:poly(A)+ mRNA export from nucleus"/>
    <property type="evidence" value="ECO:0000318"/>
    <property type="project" value="GO_Central"/>
</dbReference>
<dbReference type="GO" id="GO:0015031">
    <property type="term" value="P:protein transport"/>
    <property type="evidence" value="ECO:0007669"/>
    <property type="project" value="UniProtKB-KW"/>
</dbReference>
<dbReference type="CDD" id="cd00780">
    <property type="entry name" value="NTF2"/>
    <property type="match status" value="1"/>
</dbReference>
<dbReference type="FunFam" id="3.10.450.50:FF:000006">
    <property type="entry name" value="NTF2-related export protein 2 isoform 1"/>
    <property type="match status" value="1"/>
</dbReference>
<dbReference type="Gene3D" id="3.10.450.50">
    <property type="match status" value="1"/>
</dbReference>
<dbReference type="InterPro" id="IPR045875">
    <property type="entry name" value="NTF2"/>
</dbReference>
<dbReference type="InterPro" id="IPR032710">
    <property type="entry name" value="NTF2-like_dom_sf"/>
</dbReference>
<dbReference type="InterPro" id="IPR002075">
    <property type="entry name" value="NTF2_dom"/>
</dbReference>
<dbReference type="InterPro" id="IPR018222">
    <property type="entry name" value="Nuclear_transport_factor_2_euk"/>
</dbReference>
<dbReference type="PANTHER" id="PTHR12612">
    <property type="entry name" value="NUCLEAR TRANSPORT FACTOR 2"/>
    <property type="match status" value="1"/>
</dbReference>
<dbReference type="Pfam" id="PF02136">
    <property type="entry name" value="NTF2"/>
    <property type="match status" value="1"/>
</dbReference>
<dbReference type="SUPFAM" id="SSF54427">
    <property type="entry name" value="NTF2-like"/>
    <property type="match status" value="1"/>
</dbReference>
<dbReference type="PROSITE" id="PS50177">
    <property type="entry name" value="NTF2_DOMAIN"/>
    <property type="match status" value="1"/>
</dbReference>
<name>NXT1_CAEEL</name>
<comment type="function">
    <text evidence="1">Stimulator of protein export for NES-containing proteins. Also plays a role in the nuclear export of U1 snRNA, tRNA, and mRNA (By similarity).</text>
</comment>
<comment type="subunit">
    <text evidence="1">Preferentially binds Ran-GTP.</text>
</comment>
<comment type="interaction">
    <interactant intactId="EBI-2006451">
        <id>Q9U757</id>
    </interactant>
    <interactant intactId="EBI-2007577">
        <id>Q9XVS8</id>
        <label>nxf-2</label>
    </interactant>
    <organismsDiffer>false</organismsDiffer>
    <experiments>5</experiments>
</comment>
<comment type="subcellular location">
    <subcellularLocation>
        <location evidence="1">Nucleus</location>
    </subcellularLocation>
</comment>
<reference key="1">
    <citation type="journal article" date="1999" name="Mol. Cell. Biol.">
        <title>Identification of an NTF2-related factor that binds Ran-GTP and regulates nuclear protein export.</title>
        <authorList>
            <person name="Black B.E."/>
            <person name="Levesque L."/>
            <person name="Holaska J.M."/>
            <person name="Wood T.C."/>
            <person name="Paschal B.M."/>
        </authorList>
    </citation>
    <scope>NUCLEOTIDE SEQUENCE [MRNA]</scope>
</reference>
<reference key="2">
    <citation type="journal article" date="1998" name="Science">
        <title>Genome sequence of the nematode C. elegans: a platform for investigating biology.</title>
        <authorList>
            <consortium name="The C. elegans sequencing consortium"/>
        </authorList>
    </citation>
    <scope>NUCLEOTIDE SEQUENCE [LARGE SCALE GENOMIC DNA]</scope>
    <source>
        <strain>Bristol N2</strain>
    </source>
</reference>
<evidence type="ECO:0000250" key="1"/>
<evidence type="ECO:0000255" key="2">
    <source>
        <dbReference type="PROSITE-ProRule" id="PRU00137"/>
    </source>
</evidence>
<evidence type="ECO:0007829" key="3">
    <source>
        <dbReference type="PDB" id="3NV0"/>
    </source>
</evidence>